<gene>
    <name evidence="1" type="primary">tgt</name>
    <name type="ordered locus">SPH_2213</name>
</gene>
<organism>
    <name type="scientific">Streptococcus pneumoniae (strain Hungary19A-6)</name>
    <dbReference type="NCBI Taxonomy" id="487214"/>
    <lineage>
        <taxon>Bacteria</taxon>
        <taxon>Bacillati</taxon>
        <taxon>Bacillota</taxon>
        <taxon>Bacilli</taxon>
        <taxon>Lactobacillales</taxon>
        <taxon>Streptococcaceae</taxon>
        <taxon>Streptococcus</taxon>
    </lineage>
</organism>
<keyword id="KW-0328">Glycosyltransferase</keyword>
<keyword id="KW-0479">Metal-binding</keyword>
<keyword id="KW-0671">Queuosine biosynthesis</keyword>
<keyword id="KW-0808">Transferase</keyword>
<keyword id="KW-0819">tRNA processing</keyword>
<keyword id="KW-0862">Zinc</keyword>
<accession>B1I9B4</accession>
<proteinExistence type="inferred from homology"/>
<comment type="function">
    <text evidence="1">Catalyzes the base-exchange of a guanine (G) residue with the queuine precursor 7-aminomethyl-7-deazaguanine (PreQ1) at position 34 (anticodon wobble position) in tRNAs with GU(N) anticodons (tRNA-Asp, -Asn, -His and -Tyr). Catalysis occurs through a double-displacement mechanism. The nucleophile active site attacks the C1' of nucleotide 34 to detach the guanine base from the RNA, forming a covalent enzyme-RNA intermediate. The proton acceptor active site deprotonates the incoming PreQ1, allowing a nucleophilic attack on the C1' of the ribose to form the product. After dissociation, two additional enzymatic reactions on the tRNA convert PreQ1 to queuine (Q), resulting in the hypermodified nucleoside queuosine (7-(((4,5-cis-dihydroxy-2-cyclopenten-1-yl)amino)methyl)-7-deazaguanosine).</text>
</comment>
<comment type="catalytic activity">
    <reaction evidence="1">
        <text>7-aminomethyl-7-carbaguanine + guanosine(34) in tRNA = 7-aminomethyl-7-carbaguanosine(34) in tRNA + guanine</text>
        <dbReference type="Rhea" id="RHEA:24104"/>
        <dbReference type="Rhea" id="RHEA-COMP:10341"/>
        <dbReference type="Rhea" id="RHEA-COMP:10342"/>
        <dbReference type="ChEBI" id="CHEBI:16235"/>
        <dbReference type="ChEBI" id="CHEBI:58703"/>
        <dbReference type="ChEBI" id="CHEBI:74269"/>
        <dbReference type="ChEBI" id="CHEBI:82833"/>
        <dbReference type="EC" id="2.4.2.29"/>
    </reaction>
</comment>
<comment type="cofactor">
    <cofactor evidence="1">
        <name>Zn(2+)</name>
        <dbReference type="ChEBI" id="CHEBI:29105"/>
    </cofactor>
    <text evidence="1">Binds 1 zinc ion per subunit.</text>
</comment>
<comment type="pathway">
    <text evidence="1">tRNA modification; tRNA-queuosine biosynthesis.</text>
</comment>
<comment type="subunit">
    <text evidence="1">Homodimer. Within each dimer, one monomer is responsible for RNA recognition and catalysis, while the other monomer binds to the replacement base PreQ1.</text>
</comment>
<comment type="similarity">
    <text evidence="1">Belongs to the queuine tRNA-ribosyltransferase family.</text>
</comment>
<feature type="chain" id="PRO_1000097569" description="Queuine tRNA-ribosyltransferase">
    <location>
        <begin position="1"/>
        <end position="380"/>
    </location>
</feature>
<feature type="region of interest" description="RNA binding" evidence="1">
    <location>
        <begin position="251"/>
        <end position="257"/>
    </location>
</feature>
<feature type="region of interest" description="RNA binding; important for wobble base 34 recognition" evidence="1">
    <location>
        <begin position="275"/>
        <end position="279"/>
    </location>
</feature>
<feature type="active site" description="Proton acceptor" evidence="1">
    <location>
        <position position="96"/>
    </location>
</feature>
<feature type="active site" description="Nucleophile" evidence="1">
    <location>
        <position position="270"/>
    </location>
</feature>
<feature type="binding site" evidence="1">
    <location>
        <begin position="96"/>
        <end position="100"/>
    </location>
    <ligand>
        <name>substrate</name>
    </ligand>
</feature>
<feature type="binding site" evidence="1">
    <location>
        <position position="150"/>
    </location>
    <ligand>
        <name>substrate</name>
    </ligand>
</feature>
<feature type="binding site" evidence="1">
    <location>
        <position position="193"/>
    </location>
    <ligand>
        <name>substrate</name>
    </ligand>
</feature>
<feature type="binding site" evidence="1">
    <location>
        <position position="220"/>
    </location>
    <ligand>
        <name>substrate</name>
    </ligand>
</feature>
<feature type="binding site" evidence="1">
    <location>
        <position position="308"/>
    </location>
    <ligand>
        <name>Zn(2+)</name>
        <dbReference type="ChEBI" id="CHEBI:29105"/>
    </ligand>
</feature>
<feature type="binding site" evidence="1">
    <location>
        <position position="310"/>
    </location>
    <ligand>
        <name>Zn(2+)</name>
        <dbReference type="ChEBI" id="CHEBI:29105"/>
    </ligand>
</feature>
<feature type="binding site" evidence="1">
    <location>
        <position position="313"/>
    </location>
    <ligand>
        <name>Zn(2+)</name>
        <dbReference type="ChEBI" id="CHEBI:29105"/>
    </ligand>
</feature>
<feature type="binding site" evidence="1">
    <location>
        <position position="339"/>
    </location>
    <ligand>
        <name>Zn(2+)</name>
        <dbReference type="ChEBI" id="CHEBI:29105"/>
    </ligand>
</feature>
<name>TGT_STRPI</name>
<sequence>MSDSPIKYRLIKKEKHTGARLGEIITPHGTFPTPMFMPVGTQATVKTQSPEELKEMGSGIILSNTYHLWLRPGDELIARAGGLHKFMNWDQPILTDSGGFQVYSLADSRNITEEGVTFKNHLNGSKMFLSPEKAISIQNNLGSDIMMSFDECPQFYQPYDYVKKSIERTSRWAERGLKAHRRPHDQGLFGIVQGAGFEDLRRQSAHDLVSMDFPGYSIGGLAVGETHEEMNAVLDFTTQLLPENKPRYLMGVGAPDSLIDGVIRGVDMFDCVLPTRIARNGTCMTSQGRLVVKNAQFAEDFTPLDPECDCYTCKNYTRAYLRHLLKADETFGIRLTSYHNLYFLLNLMKQVRQAIMDDNLLEFREYFVEKYGYNKSGRNF</sequence>
<reference key="1">
    <citation type="journal article" date="2010" name="Genome Biol.">
        <title>Structure and dynamics of the pan-genome of Streptococcus pneumoniae and closely related species.</title>
        <authorList>
            <person name="Donati C."/>
            <person name="Hiller N.L."/>
            <person name="Tettelin H."/>
            <person name="Muzzi A."/>
            <person name="Croucher N.J."/>
            <person name="Angiuoli S.V."/>
            <person name="Oggioni M."/>
            <person name="Dunning Hotopp J.C."/>
            <person name="Hu F.Z."/>
            <person name="Riley D.R."/>
            <person name="Covacci A."/>
            <person name="Mitchell T.J."/>
            <person name="Bentley S.D."/>
            <person name="Kilian M."/>
            <person name="Ehrlich G.D."/>
            <person name="Rappuoli R."/>
            <person name="Moxon E.R."/>
            <person name="Masignani V."/>
        </authorList>
    </citation>
    <scope>NUCLEOTIDE SEQUENCE [LARGE SCALE GENOMIC DNA]</scope>
    <source>
        <strain>Hungary19A-6</strain>
    </source>
</reference>
<evidence type="ECO:0000255" key="1">
    <source>
        <dbReference type="HAMAP-Rule" id="MF_00168"/>
    </source>
</evidence>
<dbReference type="EC" id="2.4.2.29" evidence="1"/>
<dbReference type="EMBL" id="CP000936">
    <property type="protein sequence ID" value="ACA36738.1"/>
    <property type="molecule type" value="Genomic_DNA"/>
</dbReference>
<dbReference type="RefSeq" id="WP_001285237.1">
    <property type="nucleotide sequence ID" value="NC_010380.1"/>
</dbReference>
<dbReference type="SMR" id="B1I9B4"/>
<dbReference type="GeneID" id="93738631"/>
<dbReference type="KEGG" id="spv:SPH_2213"/>
<dbReference type="HOGENOM" id="CLU_022060_0_1_9"/>
<dbReference type="UniPathway" id="UPA00392"/>
<dbReference type="Proteomes" id="UP000002163">
    <property type="component" value="Chromosome"/>
</dbReference>
<dbReference type="GO" id="GO:0005829">
    <property type="term" value="C:cytosol"/>
    <property type="evidence" value="ECO:0007669"/>
    <property type="project" value="TreeGrafter"/>
</dbReference>
<dbReference type="GO" id="GO:0046872">
    <property type="term" value="F:metal ion binding"/>
    <property type="evidence" value="ECO:0007669"/>
    <property type="project" value="UniProtKB-KW"/>
</dbReference>
<dbReference type="GO" id="GO:0008479">
    <property type="term" value="F:tRNA-guanosine(34) queuine transglycosylase activity"/>
    <property type="evidence" value="ECO:0007669"/>
    <property type="project" value="UniProtKB-UniRule"/>
</dbReference>
<dbReference type="GO" id="GO:0008616">
    <property type="term" value="P:queuosine biosynthetic process"/>
    <property type="evidence" value="ECO:0007669"/>
    <property type="project" value="UniProtKB-UniRule"/>
</dbReference>
<dbReference type="GO" id="GO:0002099">
    <property type="term" value="P:tRNA wobble guanine modification"/>
    <property type="evidence" value="ECO:0007669"/>
    <property type="project" value="TreeGrafter"/>
</dbReference>
<dbReference type="GO" id="GO:0101030">
    <property type="term" value="P:tRNA-guanine transglycosylation"/>
    <property type="evidence" value="ECO:0007669"/>
    <property type="project" value="InterPro"/>
</dbReference>
<dbReference type="FunFam" id="3.20.20.105:FF:000001">
    <property type="entry name" value="Queuine tRNA-ribosyltransferase"/>
    <property type="match status" value="1"/>
</dbReference>
<dbReference type="Gene3D" id="3.20.20.105">
    <property type="entry name" value="Queuine tRNA-ribosyltransferase-like"/>
    <property type="match status" value="1"/>
</dbReference>
<dbReference type="HAMAP" id="MF_00168">
    <property type="entry name" value="Q_tRNA_Tgt"/>
    <property type="match status" value="1"/>
</dbReference>
<dbReference type="InterPro" id="IPR050076">
    <property type="entry name" value="ArchSynthase1/Queuine_TRR"/>
</dbReference>
<dbReference type="InterPro" id="IPR004803">
    <property type="entry name" value="TGT"/>
</dbReference>
<dbReference type="InterPro" id="IPR036511">
    <property type="entry name" value="TGT-like_sf"/>
</dbReference>
<dbReference type="InterPro" id="IPR002616">
    <property type="entry name" value="tRNA_ribo_trans-like"/>
</dbReference>
<dbReference type="NCBIfam" id="TIGR00430">
    <property type="entry name" value="Q_tRNA_tgt"/>
    <property type="match status" value="1"/>
</dbReference>
<dbReference type="NCBIfam" id="TIGR00449">
    <property type="entry name" value="tgt_general"/>
    <property type="match status" value="1"/>
</dbReference>
<dbReference type="PANTHER" id="PTHR46499">
    <property type="entry name" value="QUEUINE TRNA-RIBOSYLTRANSFERASE"/>
    <property type="match status" value="1"/>
</dbReference>
<dbReference type="PANTHER" id="PTHR46499:SF1">
    <property type="entry name" value="QUEUINE TRNA-RIBOSYLTRANSFERASE"/>
    <property type="match status" value="1"/>
</dbReference>
<dbReference type="Pfam" id="PF01702">
    <property type="entry name" value="TGT"/>
    <property type="match status" value="1"/>
</dbReference>
<dbReference type="SUPFAM" id="SSF51713">
    <property type="entry name" value="tRNA-guanine transglycosylase"/>
    <property type="match status" value="1"/>
</dbReference>
<protein>
    <recommendedName>
        <fullName evidence="1">Queuine tRNA-ribosyltransferase</fullName>
        <ecNumber evidence="1">2.4.2.29</ecNumber>
    </recommendedName>
    <alternativeName>
        <fullName evidence="1">Guanine insertion enzyme</fullName>
    </alternativeName>
    <alternativeName>
        <fullName evidence="1">tRNA-guanine transglycosylase</fullName>
    </alternativeName>
</protein>